<evidence type="ECO:0000250" key="1"/>
<evidence type="ECO:0000255" key="2">
    <source>
        <dbReference type="PROSITE-ProRule" id="PRU00175"/>
    </source>
</evidence>
<evidence type="ECO:0000256" key="3">
    <source>
        <dbReference type="SAM" id="MobiDB-lite"/>
    </source>
</evidence>
<evidence type="ECO:0000269" key="4">
    <source>
    </source>
</evidence>
<evidence type="ECO:0000305" key="5"/>
<sequence length="378" mass="42309">MGISLSKRRRDNNNNHHHPHHNPPYYYSDPPPQQPPPQNGYSYSHNYPVSTPQLSLPPPPAQPPSSSQPPPSQISYRPYGQNYHQNQYYPQQAPPYFTGYHHNGFNPMMRPVYFGPTPVAVMEPPAPYVEHQTAKKVKNDVNVNKATVRLVADDLNPGHYLVSFVFDALFDGSFTIIFFGEEESKCTIVPHLPEAFPPIKVPFQKGAGQKFLQAPGTGIDLGFFSLDDLSKPSPEEVYPLVISAETVISPSSVSEEPLVHKQITQAVLEKTNDGSFKVKVMKQILWIEGERYELQELYGIDNSITQGTAASGLEDTGGKECVICLTEPKDTAVMPCRHLCLCSDCAEELRFQTNKCPICRQPIHELVKIKVESSDEQH</sequence>
<protein>
    <recommendedName>
        <fullName>Probable E3 ubiquitin-protein ligase LUL3</fullName>
        <ecNumber>2.3.2.27</ecNumber>
    </recommendedName>
    <alternativeName>
        <fullName evidence="5">Probable RING-type E3 ubiquitin transferase LUL3</fullName>
    </alternativeName>
    <alternativeName>
        <fullName>Protein LOG2-LIKE UBIQUITIN LIGASE 3</fullName>
    </alternativeName>
    <alternativeName>
        <fullName>RING finger protein 398</fullName>
    </alternativeName>
</protein>
<feature type="initiator methionine" description="Removed" evidence="4">
    <location>
        <position position="1"/>
    </location>
</feature>
<feature type="chain" id="PRO_0000419949" description="Probable E3 ubiquitin-protein ligase LUL3">
    <location>
        <begin position="2"/>
        <end position="378"/>
    </location>
</feature>
<feature type="zinc finger region" description="RING-type; atypical" evidence="2">
    <location>
        <begin position="321"/>
        <end position="360"/>
    </location>
</feature>
<feature type="region of interest" description="Disordered" evidence="3">
    <location>
        <begin position="1"/>
        <end position="79"/>
    </location>
</feature>
<feature type="region of interest" description="DAR2 domain">
    <location>
        <begin position="164"/>
        <end position="283"/>
    </location>
</feature>
<feature type="compositionally biased region" description="Basic residues" evidence="3">
    <location>
        <begin position="1"/>
        <end position="21"/>
    </location>
</feature>
<feature type="compositionally biased region" description="Pro residues" evidence="3">
    <location>
        <begin position="29"/>
        <end position="38"/>
    </location>
</feature>
<feature type="compositionally biased region" description="Pro residues" evidence="3">
    <location>
        <begin position="55"/>
        <end position="72"/>
    </location>
</feature>
<feature type="lipid moiety-binding region" description="N-myristoyl glycine" evidence="4">
    <location>
        <position position="2"/>
    </location>
</feature>
<feature type="mutagenesis site" description="Abolishes myristoylation." evidence="4">
    <original>G</original>
    <variation>A</variation>
    <location>
        <position position="2"/>
    </location>
</feature>
<feature type="sequence conflict" description="In Ref. 3; AAM78102." evidence="5" ref="3">
    <original>C</original>
    <variation>S</variation>
    <location>
        <position position="340"/>
    </location>
</feature>
<keyword id="KW-0449">Lipoprotein</keyword>
<keyword id="KW-0479">Metal-binding</keyword>
<keyword id="KW-0519">Myristate</keyword>
<keyword id="KW-1185">Reference proteome</keyword>
<keyword id="KW-0808">Transferase</keyword>
<keyword id="KW-0833">Ubl conjugation pathway</keyword>
<keyword id="KW-0862">Zinc</keyword>
<keyword id="KW-0863">Zinc-finger</keyword>
<accession>Q84ME1</accession>
<accession>Q8L7V9</accession>
<gene>
    <name type="primary">LUL3</name>
    <name type="synonym">RF398</name>
    <name type="ordered locus">At5g19080</name>
    <name type="ORF">T16G12.120</name>
</gene>
<organism>
    <name type="scientific">Arabidopsis thaliana</name>
    <name type="common">Mouse-ear cress</name>
    <dbReference type="NCBI Taxonomy" id="3702"/>
    <lineage>
        <taxon>Eukaryota</taxon>
        <taxon>Viridiplantae</taxon>
        <taxon>Streptophyta</taxon>
        <taxon>Embryophyta</taxon>
        <taxon>Tracheophyta</taxon>
        <taxon>Spermatophyta</taxon>
        <taxon>Magnoliopsida</taxon>
        <taxon>eudicotyledons</taxon>
        <taxon>Gunneridae</taxon>
        <taxon>Pentapetalae</taxon>
        <taxon>rosids</taxon>
        <taxon>malvids</taxon>
        <taxon>Brassicales</taxon>
        <taxon>Brassicaceae</taxon>
        <taxon>Camelineae</taxon>
        <taxon>Arabidopsis</taxon>
    </lineage>
</organism>
<name>LUL3_ARATH</name>
<proteinExistence type="evidence at protein level"/>
<dbReference type="EC" id="2.3.2.27"/>
<dbReference type="EMBL" id="AC068809">
    <property type="status" value="NOT_ANNOTATED_CDS"/>
    <property type="molecule type" value="Genomic_DNA"/>
</dbReference>
<dbReference type="EMBL" id="CP002688">
    <property type="protein sequence ID" value="AED92649.1"/>
    <property type="molecule type" value="Genomic_DNA"/>
</dbReference>
<dbReference type="EMBL" id="AY125510">
    <property type="protein sequence ID" value="AAM78102.1"/>
    <property type="molecule type" value="mRNA"/>
</dbReference>
<dbReference type="EMBL" id="BT006357">
    <property type="protein sequence ID" value="AAP21165.1"/>
    <property type="molecule type" value="mRNA"/>
</dbReference>
<dbReference type="RefSeq" id="NP_197409.1">
    <property type="nucleotide sequence ID" value="NM_121913.3"/>
</dbReference>
<dbReference type="BioGRID" id="17303">
    <property type="interactions" value="7"/>
</dbReference>
<dbReference type="FunCoup" id="Q84ME1">
    <property type="interactions" value="1308"/>
</dbReference>
<dbReference type="IntAct" id="Q84ME1">
    <property type="interactions" value="7"/>
</dbReference>
<dbReference type="STRING" id="3702.Q84ME1"/>
<dbReference type="GlyGen" id="Q84ME1">
    <property type="glycosylation" value="1 site"/>
</dbReference>
<dbReference type="iPTMnet" id="Q84ME1"/>
<dbReference type="PaxDb" id="3702-AT5G19080.1"/>
<dbReference type="ProteomicsDB" id="238618"/>
<dbReference type="EnsemblPlants" id="AT5G19080.1">
    <property type="protein sequence ID" value="AT5G19080.1"/>
    <property type="gene ID" value="AT5G19080"/>
</dbReference>
<dbReference type="GeneID" id="832027"/>
<dbReference type="Gramene" id="AT5G19080.1">
    <property type="protein sequence ID" value="AT5G19080.1"/>
    <property type="gene ID" value="AT5G19080"/>
</dbReference>
<dbReference type="KEGG" id="ath:AT5G19080"/>
<dbReference type="Araport" id="AT5G19080"/>
<dbReference type="TAIR" id="AT5G19080">
    <property type="gene designation" value="LUL3"/>
</dbReference>
<dbReference type="eggNOG" id="KOG4265">
    <property type="taxonomic scope" value="Eukaryota"/>
</dbReference>
<dbReference type="HOGENOM" id="CLU_016631_0_0_1"/>
<dbReference type="InParanoid" id="Q84ME1"/>
<dbReference type="OMA" id="EEPNCTM"/>
<dbReference type="OrthoDB" id="1711136at2759"/>
<dbReference type="PhylomeDB" id="Q84ME1"/>
<dbReference type="UniPathway" id="UPA00143"/>
<dbReference type="PRO" id="PR:Q84ME1"/>
<dbReference type="Proteomes" id="UP000006548">
    <property type="component" value="Chromosome 5"/>
</dbReference>
<dbReference type="ExpressionAtlas" id="Q84ME1">
    <property type="expression patterns" value="baseline and differential"/>
</dbReference>
<dbReference type="GO" id="GO:0061630">
    <property type="term" value="F:ubiquitin protein ligase activity"/>
    <property type="evidence" value="ECO:0007669"/>
    <property type="project" value="InterPro"/>
</dbReference>
<dbReference type="GO" id="GO:0004842">
    <property type="term" value="F:ubiquitin-protein transferase activity"/>
    <property type="evidence" value="ECO:0000314"/>
    <property type="project" value="TAIR"/>
</dbReference>
<dbReference type="GO" id="GO:0008270">
    <property type="term" value="F:zinc ion binding"/>
    <property type="evidence" value="ECO:0007669"/>
    <property type="project" value="UniProtKB-KW"/>
</dbReference>
<dbReference type="GO" id="GO:0016567">
    <property type="term" value="P:protein ubiquitination"/>
    <property type="evidence" value="ECO:0007669"/>
    <property type="project" value="UniProtKB-UniPathway"/>
</dbReference>
<dbReference type="CDD" id="cd16789">
    <property type="entry name" value="mRING-HC-C3HC5_MGRN1-like"/>
    <property type="match status" value="1"/>
</dbReference>
<dbReference type="FunFam" id="1.10.1170.10:FF:000002">
    <property type="entry name" value="Baculoviral IAP repeat containing 7"/>
    <property type="match status" value="1"/>
</dbReference>
<dbReference type="FunFam" id="3.30.40.10:FF:000115">
    <property type="entry name" value="probable E3 ubiquitin-protein ligase LOG2"/>
    <property type="match status" value="1"/>
</dbReference>
<dbReference type="Gene3D" id="3.30.40.10">
    <property type="entry name" value="Zinc/RING finger domain, C3HC4 (zinc finger)"/>
    <property type="match status" value="1"/>
</dbReference>
<dbReference type="InterPro" id="IPR045195">
    <property type="entry name" value="LOG2-like_mRING_C3HC5"/>
</dbReference>
<dbReference type="InterPro" id="IPR045194">
    <property type="entry name" value="MGRN1/RNF157-like"/>
</dbReference>
<dbReference type="InterPro" id="IPR001841">
    <property type="entry name" value="Znf_RING"/>
</dbReference>
<dbReference type="InterPro" id="IPR013083">
    <property type="entry name" value="Znf_RING/FYVE/PHD"/>
</dbReference>
<dbReference type="PANTHER" id="PTHR22996:SF28">
    <property type="entry name" value="E3 UBIQUITIN-PROTEIN LIGASE LUL3-RELATED"/>
    <property type="match status" value="1"/>
</dbReference>
<dbReference type="PANTHER" id="PTHR22996">
    <property type="entry name" value="MAHOGUNIN"/>
    <property type="match status" value="1"/>
</dbReference>
<dbReference type="Pfam" id="PF13920">
    <property type="entry name" value="zf-C3HC4_3"/>
    <property type="match status" value="1"/>
</dbReference>
<dbReference type="SMART" id="SM00184">
    <property type="entry name" value="RING"/>
    <property type="match status" value="1"/>
</dbReference>
<dbReference type="SUPFAM" id="SSF57850">
    <property type="entry name" value="RING/U-box"/>
    <property type="match status" value="1"/>
</dbReference>
<dbReference type="PROSITE" id="PS50089">
    <property type="entry name" value="ZF_RING_2"/>
    <property type="match status" value="1"/>
</dbReference>
<reference key="1">
    <citation type="journal article" date="2000" name="Nature">
        <title>Sequence and analysis of chromosome 5 of the plant Arabidopsis thaliana.</title>
        <authorList>
            <person name="Tabata S."/>
            <person name="Kaneko T."/>
            <person name="Nakamura Y."/>
            <person name="Kotani H."/>
            <person name="Kato T."/>
            <person name="Asamizu E."/>
            <person name="Miyajima N."/>
            <person name="Sasamoto S."/>
            <person name="Kimura T."/>
            <person name="Hosouchi T."/>
            <person name="Kawashima K."/>
            <person name="Kohara M."/>
            <person name="Matsumoto M."/>
            <person name="Matsuno A."/>
            <person name="Muraki A."/>
            <person name="Nakayama S."/>
            <person name="Nakazaki N."/>
            <person name="Naruo K."/>
            <person name="Okumura S."/>
            <person name="Shinpo S."/>
            <person name="Takeuchi C."/>
            <person name="Wada T."/>
            <person name="Watanabe A."/>
            <person name="Yamada M."/>
            <person name="Yasuda M."/>
            <person name="Sato S."/>
            <person name="de la Bastide M."/>
            <person name="Huang E."/>
            <person name="Spiegel L."/>
            <person name="Gnoj L."/>
            <person name="O'Shaughnessy A."/>
            <person name="Preston R."/>
            <person name="Habermann K."/>
            <person name="Murray J."/>
            <person name="Johnson D."/>
            <person name="Rohlfing T."/>
            <person name="Nelson J."/>
            <person name="Stoneking T."/>
            <person name="Pepin K."/>
            <person name="Spieth J."/>
            <person name="Sekhon M."/>
            <person name="Armstrong J."/>
            <person name="Becker M."/>
            <person name="Belter E."/>
            <person name="Cordum H."/>
            <person name="Cordes M."/>
            <person name="Courtney L."/>
            <person name="Courtney W."/>
            <person name="Dante M."/>
            <person name="Du H."/>
            <person name="Edwards J."/>
            <person name="Fryman J."/>
            <person name="Haakensen B."/>
            <person name="Lamar E."/>
            <person name="Latreille P."/>
            <person name="Leonard S."/>
            <person name="Meyer R."/>
            <person name="Mulvaney E."/>
            <person name="Ozersky P."/>
            <person name="Riley A."/>
            <person name="Strowmatt C."/>
            <person name="Wagner-McPherson C."/>
            <person name="Wollam A."/>
            <person name="Yoakum M."/>
            <person name="Bell M."/>
            <person name="Dedhia N."/>
            <person name="Parnell L."/>
            <person name="Shah R."/>
            <person name="Rodriguez M."/>
            <person name="Hoon See L."/>
            <person name="Vil D."/>
            <person name="Baker J."/>
            <person name="Kirchoff K."/>
            <person name="Toth K."/>
            <person name="King L."/>
            <person name="Bahret A."/>
            <person name="Miller B."/>
            <person name="Marra M.A."/>
            <person name="Martienssen R."/>
            <person name="McCombie W.R."/>
            <person name="Wilson R.K."/>
            <person name="Murphy G."/>
            <person name="Bancroft I."/>
            <person name="Volckaert G."/>
            <person name="Wambutt R."/>
            <person name="Duesterhoeft A."/>
            <person name="Stiekema W."/>
            <person name="Pohl T."/>
            <person name="Entian K.-D."/>
            <person name="Terryn N."/>
            <person name="Hartley N."/>
            <person name="Bent E."/>
            <person name="Johnson S."/>
            <person name="Langham S.-A."/>
            <person name="McCullagh B."/>
            <person name="Robben J."/>
            <person name="Grymonprez B."/>
            <person name="Zimmermann W."/>
            <person name="Ramsperger U."/>
            <person name="Wedler H."/>
            <person name="Balke K."/>
            <person name="Wedler E."/>
            <person name="Peters S."/>
            <person name="van Staveren M."/>
            <person name="Dirkse W."/>
            <person name="Mooijman P."/>
            <person name="Klein Lankhorst R."/>
            <person name="Weitzenegger T."/>
            <person name="Bothe G."/>
            <person name="Rose M."/>
            <person name="Hauf J."/>
            <person name="Berneiser S."/>
            <person name="Hempel S."/>
            <person name="Feldpausch M."/>
            <person name="Lamberth S."/>
            <person name="Villarroel R."/>
            <person name="Gielen J."/>
            <person name="Ardiles W."/>
            <person name="Bents O."/>
            <person name="Lemcke K."/>
            <person name="Kolesov G."/>
            <person name="Mayer K.F.X."/>
            <person name="Rudd S."/>
            <person name="Schoof H."/>
            <person name="Schueller C."/>
            <person name="Zaccaria P."/>
            <person name="Mewes H.-W."/>
            <person name="Bevan M."/>
            <person name="Fransz P.F."/>
        </authorList>
    </citation>
    <scope>NUCLEOTIDE SEQUENCE [LARGE SCALE GENOMIC DNA]</scope>
    <source>
        <strain>cv. Columbia</strain>
    </source>
</reference>
<reference key="2">
    <citation type="journal article" date="2017" name="Plant J.">
        <title>Araport11: a complete reannotation of the Arabidopsis thaliana reference genome.</title>
        <authorList>
            <person name="Cheng C.Y."/>
            <person name="Krishnakumar V."/>
            <person name="Chan A.P."/>
            <person name="Thibaud-Nissen F."/>
            <person name="Schobel S."/>
            <person name="Town C.D."/>
        </authorList>
    </citation>
    <scope>GENOME REANNOTATION</scope>
    <source>
        <strain>cv. Columbia</strain>
    </source>
</reference>
<reference key="3">
    <citation type="journal article" date="2003" name="Science">
        <title>Empirical analysis of transcriptional activity in the Arabidopsis genome.</title>
        <authorList>
            <person name="Yamada K."/>
            <person name="Lim J."/>
            <person name="Dale J.M."/>
            <person name="Chen H."/>
            <person name="Shinn P."/>
            <person name="Palm C.J."/>
            <person name="Southwick A.M."/>
            <person name="Wu H.C."/>
            <person name="Kim C.J."/>
            <person name="Nguyen M."/>
            <person name="Pham P.K."/>
            <person name="Cheuk R.F."/>
            <person name="Karlin-Newmann G."/>
            <person name="Liu S.X."/>
            <person name="Lam B."/>
            <person name="Sakano H."/>
            <person name="Wu T."/>
            <person name="Yu G."/>
            <person name="Miranda M."/>
            <person name="Quach H.L."/>
            <person name="Tripp M."/>
            <person name="Chang C.H."/>
            <person name="Lee J.M."/>
            <person name="Toriumi M.J."/>
            <person name="Chan M.M."/>
            <person name="Tang C.C."/>
            <person name="Onodera C.S."/>
            <person name="Deng J.M."/>
            <person name="Akiyama K."/>
            <person name="Ansari Y."/>
            <person name="Arakawa T."/>
            <person name="Banh J."/>
            <person name="Banno F."/>
            <person name="Bowser L."/>
            <person name="Brooks S.Y."/>
            <person name="Carninci P."/>
            <person name="Chao Q."/>
            <person name="Choy N."/>
            <person name="Enju A."/>
            <person name="Goldsmith A.D."/>
            <person name="Gurjal M."/>
            <person name="Hansen N.F."/>
            <person name="Hayashizaki Y."/>
            <person name="Johnson-Hopson C."/>
            <person name="Hsuan V.W."/>
            <person name="Iida K."/>
            <person name="Karnes M."/>
            <person name="Khan S."/>
            <person name="Koesema E."/>
            <person name="Ishida J."/>
            <person name="Jiang P.X."/>
            <person name="Jones T."/>
            <person name="Kawai J."/>
            <person name="Kamiya A."/>
            <person name="Meyers C."/>
            <person name="Nakajima M."/>
            <person name="Narusaka M."/>
            <person name="Seki M."/>
            <person name="Sakurai T."/>
            <person name="Satou M."/>
            <person name="Tamse R."/>
            <person name="Vaysberg M."/>
            <person name="Wallender E.K."/>
            <person name="Wong C."/>
            <person name="Yamamura Y."/>
            <person name="Yuan S."/>
            <person name="Shinozaki K."/>
            <person name="Davis R.W."/>
            <person name="Theologis A."/>
            <person name="Ecker J.R."/>
        </authorList>
    </citation>
    <scope>NUCLEOTIDE SEQUENCE [LARGE SCALE MRNA]</scope>
    <source>
        <strain>cv. Columbia</strain>
    </source>
</reference>
<reference key="4">
    <citation type="journal article" date="2002" name="Genome Biol.">
        <title>Evaluation and classification of RING-finger domains encoded by the Arabidopsis genome.</title>
        <authorList>
            <person name="Kosarev P."/>
            <person name="Mayer K.F.X."/>
            <person name="Hardtke C.S."/>
        </authorList>
    </citation>
    <scope>GENE FAMILY ORGANIZATION</scope>
</reference>
<reference key="5">
    <citation type="journal article" date="2005" name="Plant Physiol.">
        <title>Functional analysis of the RING-type ubiquitin ligase family of Arabidopsis.</title>
        <authorList>
            <person name="Stone S.L."/>
            <person name="Hauksdottir H."/>
            <person name="Troy A."/>
            <person name="Herschleb J."/>
            <person name="Kraft E."/>
            <person name="Callis J."/>
        </authorList>
    </citation>
    <scope>DOMAIN</scope>
</reference>
<reference key="6">
    <citation type="journal article" date="2012" name="Plant Physiol.">
        <title>The ubiquitin E3 ligase LOSS OF GDU2 is required for GLUTAMINE DUMPER1-induced amino acid secretion in Arabidopsis.</title>
        <authorList>
            <person name="Pratelli R."/>
            <person name="Guerra D.D."/>
            <person name="Yu S."/>
            <person name="Wogulis M."/>
            <person name="Kraft E."/>
            <person name="Frommer W.B."/>
            <person name="Callis J."/>
            <person name="Pilot G."/>
        </authorList>
    </citation>
    <scope>GENE SUBFAMILY</scope>
    <scope>FUNCTION</scope>
    <scope>MUTAGENESIS OF GLY-2</scope>
    <scope>MYRISTOYLATION AT GLY-2</scope>
</reference>
<comment type="function">
    <text evidence="4">Acts as an E3 ubiquitin-protein ligase, or as part of E3 complex, which accepts ubiquitin from specific E2 ubiquitin-conjugating enzymes and then transfers it to substrates (in vitro).</text>
</comment>
<comment type="catalytic activity">
    <reaction>
        <text>S-ubiquitinyl-[E2 ubiquitin-conjugating enzyme]-L-cysteine + [acceptor protein]-L-lysine = [E2 ubiquitin-conjugating enzyme]-L-cysteine + N(6)-ubiquitinyl-[acceptor protein]-L-lysine.</text>
        <dbReference type="EC" id="2.3.2.27"/>
    </reaction>
</comment>
<comment type="pathway">
    <text>Protein modification; protein ubiquitination.</text>
</comment>
<comment type="domain">
    <text evidence="1">The RING-type zinc finger domain mediates binding to an E2 ubiquitin-conjugating enzyme.</text>
</comment>
<comment type="PTM">
    <text evidence="4">Myristoylated (in vitro).</text>
</comment>
<comment type="similarity">
    <text evidence="5">Belongs to the RING-type zinc finger family. LOG2 subfamily.</text>
</comment>